<comment type="function">
    <text evidence="6 7 10">Acts as a negative regulator of SRC by activating CSK which inhibits SRC activity and downstream signaling, leading to impaired cell spreading and migration. Regulates dendritic spine morphology. Involved in calcium-dependent exocytosis. May play a role in neurotransmitter release or synapse maintenance.</text>
</comment>
<comment type="subunit">
    <text evidence="1 6 7 9 10">Interacts with the N-terminal coiled-coil region of SNAP25 (By similarity). Interacts with BCAR1/p130Cas and SRC through its C-terminal domain. Interacts with CSK, CTTN, SORBS3/vinexin, SYP and MAPRE3/EB3.</text>
</comment>
<comment type="interaction">
    <interactant intactId="EBI-1393949">
        <id>Q9C0H9</id>
    </interactant>
    <interactant intactId="EBI-702093">
        <id>P56945</id>
        <label>BCAR1</label>
    </interactant>
    <organismsDiffer>false</organismsDiffer>
    <experiments>3</experiments>
</comment>
<comment type="interaction">
    <interactant intactId="EBI-1393949">
        <id>Q9C0H9</id>
    </interactant>
    <interactant intactId="EBI-621482">
        <id>P12931</id>
        <label>SRC</label>
    </interactant>
    <organismsDiffer>false</organismsDiffer>
    <experiments>3</experiments>
</comment>
<comment type="interaction">
    <interactant intactId="EBI-25907611">
        <id>Q9C0H9-4</id>
    </interactant>
    <interactant intactId="EBI-725647">
        <id>Q99732</id>
        <label>LITAF</label>
    </interactant>
    <organismsDiffer>false</organismsDiffer>
    <experiments>3</experiments>
</comment>
<comment type="subcellular location">
    <subcellularLocation>
        <location evidence="3">Cytoplasm</location>
    </subcellularLocation>
    <subcellularLocation>
        <location evidence="3">Cytoplasm</location>
        <location evidence="3">Cytoskeleton</location>
    </subcellularLocation>
    <subcellularLocation>
        <location evidence="3">Cell projection</location>
        <location evidence="3">Axon</location>
    </subcellularLocation>
    <subcellularLocation>
        <location evidence="3">Cell projection</location>
        <location evidence="3">Dendrite</location>
    </subcellularLocation>
    <subcellularLocation>
        <location evidence="3">Presynapse</location>
    </subcellularLocation>
    <subcellularLocation>
        <location evidence="3">Postsynapse</location>
    </subcellularLocation>
    <subcellularLocation>
        <location evidence="3">Postsynaptic density</location>
    </subcellularLocation>
    <text evidence="3">Localized to the perinuclear region, lamellopodia, cortical actin and actin stress fibers but not to focal adhesions. Strongly expressed in axons and dendrites of the CA1 and CA3 hippocampal regions and of the dentate gyrus. Detected in both presynapses and postsynapses and enriched in postsynaptic density fractions.</text>
</comment>
<comment type="alternative products">
    <event type="alternative splicing"/>
    <isoform>
        <id>Q9C0H9-5</id>
        <name>1</name>
        <sequence type="displayed"/>
    </isoform>
    <isoform>
        <id>Q9C0H9-2</id>
        <name evidence="12">2</name>
        <sequence type="described" ref="VSP_059451 VSP_059454"/>
    </isoform>
    <isoform>
        <id>Q9C0H9-4</id>
        <name>3</name>
        <sequence type="described" ref="VSP_059450 VSP_059452 VSP_059453"/>
    </isoform>
</comment>
<comment type="tissue specificity">
    <text evidence="8">Expressed in some primary breast carcinomas where its presence is significantly associated with increased tumor size. Not detected in normal breast tissue.</text>
</comment>
<comment type="PTM">
    <text evidence="6">Tyrosine-phosphorylated in response to EGF and to cell adhesion to integrin ligands.</text>
</comment>
<comment type="similarity">
    <text evidence="12">Belongs to the SRCIN1 family.</text>
</comment>
<sequence length="1183" mass="127105">MGNAPSQDPERSSPPMLSADDAEYPREYRTLGGGGGGGSGGRRFSNVGLVHTSERRHTVIAAQSLEALSGLQKADADRKRDAFMDHLKSKYPQHALALRGQQDRMREQPNYWSFKTRSSRHTQGAQPGLADQAAKLSYASAESLETMSEAELPLGFSRMNRFRQSLPLSRSASQTKLRSPGVLFLQFGEETRRVHITHEVSSLDTLHALIAHMFPQKLTMGMLKSPNTAILIKDEARNVFYELEDVRDIQDRSIIKIYRKEPLYAAFPGSHLTNGDLRREMVYASRESSPTRRLNNLSPAPHLASGSPPPGLPSGLPSGLQSGSPSRSRLSYAGGRPPSYAGSPVHHAAERLGGAPAAQGVSPSPSAILERRDVKPDEDLASKAGGMVLVKGEGLYADPYGLLHEGRLSLAAAAGDPFAYPGAGGLYKRGSVRSLSTYSAAALQSDLEDSLYKAAGGGGPLYGDGYGFRLPPSSPQKLADVAAPPGGPPPPHSPYSGPPSRGSPVRQSFRKDSGSSSVFAESPGGKTRSAGSASTAGAPPSELFPGPGERSLVGFGPPVPAKDTETRERMEAMEKQIASLTGLVQSALLRGSEPETPSEKIEGSNGAATPSAPCGSGGRSSGATPVSGPPPPSASSTPAGQPTAVSRLQMQLHLRGLQNSASDLRGQLQQLRKLQLQNQESVRALLKRTEAELSMRVSEAARRQEDPLQRQRTLVEEERLRYLNDEELITQQLNDLEKSVEKIQRDVSHNHRLVPGPELEEKALVLKQLGETLTELKAHFPGLQSKMRVVLRVEVEAVKFLKEEPQRLDGLLKRCRGVTDTLAQIRRQVDEGVWPPPNNLLSQSPKKVTAETDFNKSVDFEMPPPSPPLNLHELSGPAEGASLTPKGGNPTKGLDTPGKRSVDKAVSVEAAERDWEEKRAALTQYSAKDINRLLEETQAELLKAIPDLDCASKAHPGPAPTPDHKPPKAPHGQKAAPRTEPSGRRGSDELTVPRYRTEKPSKSPPPPPPRRSFPSSHGLTTTRTGEVVVTSKKDSAFIKKAESEELEVQKPQVKLRRAVSEVARPASTPPIMASAIKDEDDEDRIIAELESGGGSVPPMKVVTPGASRLKAAQGQAGSPDKSKHGKQRAEYMRIQAQQQATKPSKEMSGSNETSSPVSEKPSASRTSIPVLTSFGARNSSISF</sequence>
<evidence type="ECO:0000250" key="1"/>
<evidence type="ECO:0000250" key="2">
    <source>
        <dbReference type="UniProtKB" id="Q9QWI6"/>
    </source>
</evidence>
<evidence type="ECO:0000250" key="3">
    <source>
        <dbReference type="UniProtKB" id="Q9QXY2"/>
    </source>
</evidence>
<evidence type="ECO:0000255" key="4"/>
<evidence type="ECO:0000256" key="5">
    <source>
        <dbReference type="SAM" id="MobiDB-lite"/>
    </source>
</evidence>
<evidence type="ECO:0000269" key="6">
    <source>
    </source>
</evidence>
<evidence type="ECO:0000269" key="7">
    <source>
    </source>
</evidence>
<evidence type="ECO:0000269" key="8">
    <source>
    </source>
</evidence>
<evidence type="ECO:0000269" key="9">
    <source>
    </source>
</evidence>
<evidence type="ECO:0000269" key="10">
    <source>
    </source>
</evidence>
<evidence type="ECO:0000303" key="11">
    <source>
    </source>
</evidence>
<evidence type="ECO:0000305" key="12"/>
<evidence type="ECO:0000312" key="13">
    <source>
        <dbReference type="EMBL" id="BAB21775.1"/>
    </source>
</evidence>
<evidence type="ECO:0000312" key="14">
    <source>
        <dbReference type="HGNC" id="HGNC:29506"/>
    </source>
</evidence>
<evidence type="ECO:0007744" key="15">
    <source>
    </source>
</evidence>
<name>SRCN1_HUMAN</name>
<organism evidence="13">
    <name type="scientific">Homo sapiens</name>
    <name type="common">Human</name>
    <dbReference type="NCBI Taxonomy" id="9606"/>
    <lineage>
        <taxon>Eukaryota</taxon>
        <taxon>Metazoa</taxon>
        <taxon>Chordata</taxon>
        <taxon>Craniata</taxon>
        <taxon>Vertebrata</taxon>
        <taxon>Euteleostomi</taxon>
        <taxon>Mammalia</taxon>
        <taxon>Eutheria</taxon>
        <taxon>Euarchontoglires</taxon>
        <taxon>Primates</taxon>
        <taxon>Haplorrhini</taxon>
        <taxon>Catarrhini</taxon>
        <taxon>Hominidae</taxon>
        <taxon>Homo</taxon>
    </lineage>
</organism>
<reference evidence="12" key="1">
    <citation type="submission" date="2003-12" db="EMBL/GenBank/DDBJ databases">
        <title>Homo sapiens cDNA, SNIP homolog.</title>
        <authorList>
            <person name="Sugiyama A."/>
            <person name="Inoue H."/>
            <person name="Oka M."/>
        </authorList>
    </citation>
    <scope>NUCLEOTIDE SEQUENCE [MRNA] (ISOFORM 1)</scope>
    <source>
        <tissue>Brain</tissue>
    </source>
</reference>
<reference key="2">
    <citation type="journal article" date="2004" name="Nat. Genet.">
        <title>Complete sequencing and characterization of 21,243 full-length human cDNAs.</title>
        <authorList>
            <person name="Ota T."/>
            <person name="Suzuki Y."/>
            <person name="Nishikawa T."/>
            <person name="Otsuki T."/>
            <person name="Sugiyama T."/>
            <person name="Irie R."/>
            <person name="Wakamatsu A."/>
            <person name="Hayashi K."/>
            <person name="Sato H."/>
            <person name="Nagai K."/>
            <person name="Kimura K."/>
            <person name="Makita H."/>
            <person name="Sekine M."/>
            <person name="Obayashi M."/>
            <person name="Nishi T."/>
            <person name="Shibahara T."/>
            <person name="Tanaka T."/>
            <person name="Ishii S."/>
            <person name="Yamamoto J."/>
            <person name="Saito K."/>
            <person name="Kawai Y."/>
            <person name="Isono Y."/>
            <person name="Nakamura Y."/>
            <person name="Nagahari K."/>
            <person name="Murakami K."/>
            <person name="Yasuda T."/>
            <person name="Iwayanagi T."/>
            <person name="Wagatsuma M."/>
            <person name="Shiratori A."/>
            <person name="Sudo H."/>
            <person name="Hosoiri T."/>
            <person name="Kaku Y."/>
            <person name="Kodaira H."/>
            <person name="Kondo H."/>
            <person name="Sugawara M."/>
            <person name="Takahashi M."/>
            <person name="Kanda K."/>
            <person name="Yokoi T."/>
            <person name="Furuya T."/>
            <person name="Kikkawa E."/>
            <person name="Omura Y."/>
            <person name="Abe K."/>
            <person name="Kamihara K."/>
            <person name="Katsuta N."/>
            <person name="Sato K."/>
            <person name="Tanikawa M."/>
            <person name="Yamazaki M."/>
            <person name="Ninomiya K."/>
            <person name="Ishibashi T."/>
            <person name="Yamashita H."/>
            <person name="Murakawa K."/>
            <person name="Fujimori K."/>
            <person name="Tanai H."/>
            <person name="Kimata M."/>
            <person name="Watanabe M."/>
            <person name="Hiraoka S."/>
            <person name="Chiba Y."/>
            <person name="Ishida S."/>
            <person name="Ono Y."/>
            <person name="Takiguchi S."/>
            <person name="Watanabe S."/>
            <person name="Yosida M."/>
            <person name="Hotuta T."/>
            <person name="Kusano J."/>
            <person name="Kanehori K."/>
            <person name="Takahashi-Fujii A."/>
            <person name="Hara H."/>
            <person name="Tanase T.-O."/>
            <person name="Nomura Y."/>
            <person name="Togiya S."/>
            <person name="Komai F."/>
            <person name="Hara R."/>
            <person name="Takeuchi K."/>
            <person name="Arita M."/>
            <person name="Imose N."/>
            <person name="Musashino K."/>
            <person name="Yuuki H."/>
            <person name="Oshima A."/>
            <person name="Sasaki N."/>
            <person name="Aotsuka S."/>
            <person name="Yoshikawa Y."/>
            <person name="Matsunawa H."/>
            <person name="Ichihara T."/>
            <person name="Shiohata N."/>
            <person name="Sano S."/>
            <person name="Moriya S."/>
            <person name="Momiyama H."/>
            <person name="Satoh N."/>
            <person name="Takami S."/>
            <person name="Terashima Y."/>
            <person name="Suzuki O."/>
            <person name="Nakagawa S."/>
            <person name="Senoh A."/>
            <person name="Mizoguchi H."/>
            <person name="Goto Y."/>
            <person name="Shimizu F."/>
            <person name="Wakebe H."/>
            <person name="Hishigaki H."/>
            <person name="Watanabe T."/>
            <person name="Sugiyama A."/>
            <person name="Takemoto M."/>
            <person name="Kawakami B."/>
            <person name="Yamazaki M."/>
            <person name="Watanabe K."/>
            <person name="Kumagai A."/>
            <person name="Itakura S."/>
            <person name="Fukuzumi Y."/>
            <person name="Fujimori Y."/>
            <person name="Komiyama M."/>
            <person name="Tashiro H."/>
            <person name="Tanigami A."/>
            <person name="Fujiwara T."/>
            <person name="Ono T."/>
            <person name="Yamada K."/>
            <person name="Fujii Y."/>
            <person name="Ozaki K."/>
            <person name="Hirao M."/>
            <person name="Ohmori Y."/>
            <person name="Kawabata A."/>
            <person name="Hikiji T."/>
            <person name="Kobatake N."/>
            <person name="Inagaki H."/>
            <person name="Ikema Y."/>
            <person name="Okamoto S."/>
            <person name="Okitani R."/>
            <person name="Kawakami T."/>
            <person name="Noguchi S."/>
            <person name="Itoh T."/>
            <person name="Shigeta K."/>
            <person name="Senba T."/>
            <person name="Matsumura K."/>
            <person name="Nakajima Y."/>
            <person name="Mizuno T."/>
            <person name="Morinaga M."/>
            <person name="Sasaki M."/>
            <person name="Togashi T."/>
            <person name="Oyama M."/>
            <person name="Hata H."/>
            <person name="Watanabe M."/>
            <person name="Komatsu T."/>
            <person name="Mizushima-Sugano J."/>
            <person name="Satoh T."/>
            <person name="Shirai Y."/>
            <person name="Takahashi Y."/>
            <person name="Nakagawa K."/>
            <person name="Okumura K."/>
            <person name="Nagase T."/>
            <person name="Nomura N."/>
            <person name="Kikuchi H."/>
            <person name="Masuho Y."/>
            <person name="Yamashita R."/>
            <person name="Nakai K."/>
            <person name="Yada T."/>
            <person name="Nakamura Y."/>
            <person name="Ohara O."/>
            <person name="Isogai T."/>
            <person name="Sugano S."/>
        </authorList>
    </citation>
    <scope>NUCLEOTIDE SEQUENCE [LARGE SCALE MRNA] (ISOFORM 2)</scope>
    <source>
        <tissue>Cerebellum</tissue>
    </source>
</reference>
<reference key="3">
    <citation type="journal article" date="2006" name="Nature">
        <title>DNA sequence of human chromosome 17 and analysis of rearrangement in the human lineage.</title>
        <authorList>
            <person name="Zody M.C."/>
            <person name="Garber M."/>
            <person name="Adams D.J."/>
            <person name="Sharpe T."/>
            <person name="Harrow J."/>
            <person name="Lupski J.R."/>
            <person name="Nicholson C."/>
            <person name="Searle S.M."/>
            <person name="Wilming L."/>
            <person name="Young S.K."/>
            <person name="Abouelleil A."/>
            <person name="Allen N.R."/>
            <person name="Bi W."/>
            <person name="Bloom T."/>
            <person name="Borowsky M.L."/>
            <person name="Bugalter B.E."/>
            <person name="Butler J."/>
            <person name="Chang J.L."/>
            <person name="Chen C.-K."/>
            <person name="Cook A."/>
            <person name="Corum B."/>
            <person name="Cuomo C.A."/>
            <person name="de Jong P.J."/>
            <person name="DeCaprio D."/>
            <person name="Dewar K."/>
            <person name="FitzGerald M."/>
            <person name="Gilbert J."/>
            <person name="Gibson R."/>
            <person name="Gnerre S."/>
            <person name="Goldstein S."/>
            <person name="Grafham D.V."/>
            <person name="Grocock R."/>
            <person name="Hafez N."/>
            <person name="Hagopian D.S."/>
            <person name="Hart E."/>
            <person name="Norman C.H."/>
            <person name="Humphray S."/>
            <person name="Jaffe D.B."/>
            <person name="Jones M."/>
            <person name="Kamal M."/>
            <person name="Khodiyar V.K."/>
            <person name="LaButti K."/>
            <person name="Laird G."/>
            <person name="Lehoczky J."/>
            <person name="Liu X."/>
            <person name="Lokyitsang T."/>
            <person name="Loveland J."/>
            <person name="Lui A."/>
            <person name="Macdonald P."/>
            <person name="Major J.E."/>
            <person name="Matthews L."/>
            <person name="Mauceli E."/>
            <person name="McCarroll S.A."/>
            <person name="Mihalev A.H."/>
            <person name="Mudge J."/>
            <person name="Nguyen C."/>
            <person name="Nicol R."/>
            <person name="O'Leary S.B."/>
            <person name="Osoegawa K."/>
            <person name="Schwartz D.C."/>
            <person name="Shaw-Smith C."/>
            <person name="Stankiewicz P."/>
            <person name="Steward C."/>
            <person name="Swarbreck D."/>
            <person name="Venkataraman V."/>
            <person name="Whittaker C.A."/>
            <person name="Yang X."/>
            <person name="Zimmer A.R."/>
            <person name="Bradley A."/>
            <person name="Hubbard T."/>
            <person name="Birren B.W."/>
            <person name="Rogers J."/>
            <person name="Lander E.S."/>
            <person name="Nusbaum C."/>
        </authorList>
    </citation>
    <scope>NUCLEOTIDE SEQUENCE [LARGE SCALE GENOMIC DNA]</scope>
</reference>
<reference key="4">
    <citation type="journal article" date="2004" name="Genome Res.">
        <title>The status, quality, and expansion of the NIH full-length cDNA project: the Mammalian Gene Collection (MGC).</title>
        <authorList>
            <consortium name="The MGC Project Team"/>
        </authorList>
    </citation>
    <scope>NUCLEOTIDE SEQUENCE [LARGE SCALE MRNA] (ISOFORM 3)</scope>
    <source>
        <tissue>Eye</tissue>
    </source>
</reference>
<reference evidence="12" key="5">
    <citation type="journal article" date="2000" name="DNA Res.">
        <title>Prediction of the coding sequences of unidentified human genes. XIX. The complete sequences of 100 new cDNA clones from brain which code for large proteins in vitro.</title>
        <authorList>
            <person name="Nagase T."/>
            <person name="Kikuno R."/>
            <person name="Hattori A."/>
            <person name="Kondo Y."/>
            <person name="Okumura K."/>
            <person name="Ohara O."/>
        </authorList>
    </citation>
    <scope>NUCLEOTIDE SEQUENCE [LARGE SCALE MRNA] OF 422-1183 (ISOFORM 1)</scope>
    <source>
        <tissue>Brain</tissue>
    </source>
</reference>
<reference evidence="12" key="6">
    <citation type="journal article" date="2004" name="Mol. Biol. Cell">
        <title>p130Cas-associated protein (p140Cap) as a new tyrosine-phosphorylated protein involved in cell spreading.</title>
        <authorList>
            <person name="Di Stefano P."/>
            <person name="Cabodi S."/>
            <person name="Erba E.B."/>
            <person name="Margaria V."/>
            <person name="Bergatto E."/>
            <person name="Giuffrida M.G."/>
            <person name="Silengo L."/>
            <person name="Tarone G."/>
            <person name="Turco E."/>
            <person name="Defilippi P."/>
        </authorList>
    </citation>
    <scope>PROTEIN SEQUENCE OF 434-453; 620-647; 711-721; 739-745; 828-847; 969-995; 1012-1023; 1085-1100; 1111-1128 AND 1134-1145 (ISOFORM 1)</scope>
    <scope>FUNCTION</scope>
    <scope>SUBCELLULAR LOCATION</scope>
    <scope>INTERACTION WITH BCAR1</scope>
    <scope>PHOSPHORYLATION</scope>
</reference>
<reference key="7">
    <citation type="journal article" date="2007" name="EMBO J.">
        <title>p140Cap protein suppresses tumour cell properties, regulating Csk and Src kinase activity.</title>
        <authorList>
            <person name="Di Stefano P."/>
            <person name="Damiano L."/>
            <person name="Cabodi S."/>
            <person name="Aramu S."/>
            <person name="Tordella L."/>
            <person name="Praduroux A."/>
            <person name="Piva R."/>
            <person name="Cavallo F."/>
            <person name="Forni G."/>
            <person name="Silengo L."/>
            <person name="Tarone G."/>
            <person name="Turco E."/>
            <person name="Defilippi P."/>
        </authorList>
    </citation>
    <scope>FUNCTION</scope>
    <scope>INTERACTION WITH CSK AND SRC</scope>
</reference>
<reference key="8">
    <citation type="journal article" date="2008" name="Br. J. Cancer">
        <title>SNIP/p140Cap mRNA expression is an unfavourable prognostic factor in breast cancer and is not expressed in normal breast tissue.</title>
        <authorList>
            <person name="Kennedy S."/>
            <person name="Clynes M."/>
            <person name="Doolan P."/>
            <person name="Mehta J.P."/>
            <person name="Rani S."/>
            <person name="Crown J."/>
            <person name="O'Driscoll L."/>
        </authorList>
    </citation>
    <scope>TISSUE SPECIFICITY</scope>
</reference>
<reference key="9">
    <citation type="journal article" date="2008" name="J. Neurochem.">
        <title>Characterization of a multidomain adaptor protein, p140Cap, as part of a pre-synaptic complex.</title>
        <authorList>
            <person name="Ito H."/>
            <person name="Atsuzawa K."/>
            <person name="Sudo K."/>
            <person name="Di Stefano P."/>
            <person name="Iwamoto I."/>
            <person name="Morishita R."/>
            <person name="Takei S."/>
            <person name="Semba R."/>
            <person name="Defilippi P."/>
            <person name="Asano T."/>
            <person name="Usuda N."/>
            <person name="Nagata K."/>
        </authorList>
    </citation>
    <scope>INTERACTION WITH SORBS3 AND SYP</scope>
</reference>
<reference key="10">
    <citation type="journal article" date="2009" name="Neuron">
        <title>Dynamic microtubules regulate dendritic spine morphology and synaptic plasticity.</title>
        <authorList>
            <person name="Jaworski J."/>
            <person name="Kapitein L.C."/>
            <person name="Gouveia S.M."/>
            <person name="Dortland B.R."/>
            <person name="Wulf P.S."/>
            <person name="Grigoriev I."/>
            <person name="Camera P."/>
            <person name="Spangler S.A."/>
            <person name="Di Stefano P."/>
            <person name="Demmers J."/>
            <person name="Krugers H."/>
            <person name="Defilippi P."/>
            <person name="Akhmanova A."/>
            <person name="Hoogenraad C.C."/>
        </authorList>
    </citation>
    <scope>FUNCTION</scope>
    <scope>INTERACTION WITH CTTN AND MAPRE3</scope>
    <scope>SUBCELLULAR LOCATION</scope>
</reference>
<reference key="11">
    <citation type="journal article" date="2014" name="J. Proteomics">
        <title>An enzyme assisted RP-RPLC approach for in-depth analysis of human liver phosphoproteome.</title>
        <authorList>
            <person name="Bian Y."/>
            <person name="Song C."/>
            <person name="Cheng K."/>
            <person name="Dong M."/>
            <person name="Wang F."/>
            <person name="Huang J."/>
            <person name="Sun D."/>
            <person name="Wang L."/>
            <person name="Ye M."/>
            <person name="Zou H."/>
        </authorList>
    </citation>
    <scope>PHOSPHORYLATION [LARGE SCALE ANALYSIS] AT SER-45; THR-52; SER-53; SER-64; SER-364; SER-857; SER-866 AND THR-884</scope>
    <scope>IDENTIFICATION BY MASS SPECTROMETRY [LARGE SCALE ANALYSIS]</scope>
    <source>
        <tissue>Liver</tissue>
    </source>
</reference>
<proteinExistence type="evidence at protein level"/>
<keyword id="KW-0025">Alternative splicing</keyword>
<keyword id="KW-0966">Cell projection</keyword>
<keyword id="KW-0175">Coiled coil</keyword>
<keyword id="KW-0963">Cytoplasm</keyword>
<keyword id="KW-0206">Cytoskeleton</keyword>
<keyword id="KW-0903">Direct protein sequencing</keyword>
<keyword id="KW-0268">Exocytosis</keyword>
<keyword id="KW-0488">Methylation</keyword>
<keyword id="KW-0597">Phosphoprotein</keyword>
<keyword id="KW-1267">Proteomics identification</keyword>
<keyword id="KW-1185">Reference proteome</keyword>
<keyword id="KW-0770">Synapse</keyword>
<feature type="chain" id="PRO_0000072011" description="SRC kinase signaling inhibitor 1">
    <location>
        <begin position="1"/>
        <end position="1183"/>
    </location>
</feature>
<feature type="region of interest" description="Disordered" evidence="5">
    <location>
        <begin position="1"/>
        <end position="44"/>
    </location>
</feature>
<feature type="region of interest" description="Disordered" evidence="5">
    <location>
        <begin position="284"/>
        <end position="379"/>
    </location>
</feature>
<feature type="region of interest" description="Disordered" evidence="5">
    <location>
        <begin position="466"/>
        <end position="643"/>
    </location>
</feature>
<feature type="region of interest" description="Interaction with SNAP25" evidence="3">
    <location>
        <begin position="647"/>
        <end position="697"/>
    </location>
</feature>
<feature type="region of interest" description="Disordered" evidence="5">
    <location>
        <begin position="861"/>
        <end position="907"/>
    </location>
</feature>
<feature type="region of interest" description="Disordered" evidence="5">
    <location>
        <begin position="949"/>
        <end position="1032"/>
    </location>
</feature>
<feature type="region of interest" description="Disordered" evidence="5">
    <location>
        <begin position="1058"/>
        <end position="1081"/>
    </location>
</feature>
<feature type="region of interest" description="Disordered" evidence="5">
    <location>
        <begin position="1105"/>
        <end position="1183"/>
    </location>
</feature>
<feature type="coiled-coil region" evidence="4">
    <location>
        <begin position="654"/>
        <end position="674"/>
    </location>
</feature>
<feature type="coiled-coil region" evidence="4">
    <location>
        <begin position="726"/>
        <end position="746"/>
    </location>
</feature>
<feature type="compositionally biased region" description="Gly residues" evidence="5">
    <location>
        <begin position="31"/>
        <end position="41"/>
    </location>
</feature>
<feature type="compositionally biased region" description="Polar residues" evidence="5">
    <location>
        <begin position="286"/>
        <end position="296"/>
    </location>
</feature>
<feature type="compositionally biased region" description="Low complexity" evidence="5">
    <location>
        <begin position="297"/>
        <end position="306"/>
    </location>
</feature>
<feature type="compositionally biased region" description="Low complexity" evidence="5">
    <location>
        <begin position="313"/>
        <end position="331"/>
    </location>
</feature>
<feature type="compositionally biased region" description="Basic and acidic residues" evidence="5">
    <location>
        <begin position="369"/>
        <end position="379"/>
    </location>
</feature>
<feature type="compositionally biased region" description="Pro residues" evidence="5">
    <location>
        <begin position="485"/>
        <end position="497"/>
    </location>
</feature>
<feature type="compositionally biased region" description="Low complexity" evidence="5">
    <location>
        <begin position="524"/>
        <end position="541"/>
    </location>
</feature>
<feature type="compositionally biased region" description="Basic and acidic residues" evidence="5">
    <location>
        <begin position="562"/>
        <end position="574"/>
    </location>
</feature>
<feature type="compositionally biased region" description="Low complexity" evidence="5">
    <location>
        <begin position="634"/>
        <end position="643"/>
    </location>
</feature>
<feature type="compositionally biased region" description="Pro residues" evidence="5">
    <location>
        <begin position="1002"/>
        <end position="1011"/>
    </location>
</feature>
<feature type="compositionally biased region" description="Polar residues" evidence="5">
    <location>
        <begin position="1135"/>
        <end position="1183"/>
    </location>
</feature>
<feature type="modified residue" description="Phosphoserine" evidence="2">
    <location>
        <position position="13"/>
    </location>
</feature>
<feature type="modified residue" description="Phosphoserine" evidence="2">
    <location>
        <position position="18"/>
    </location>
</feature>
<feature type="modified residue" description="Phosphoserine" evidence="15">
    <location>
        <position position="45"/>
    </location>
</feature>
<feature type="modified residue" description="Phosphothreonine" evidence="15">
    <location>
        <position position="52"/>
    </location>
</feature>
<feature type="modified residue" description="Phosphoserine" evidence="15">
    <location>
        <position position="53"/>
    </location>
</feature>
<feature type="modified residue" description="Phosphoserine" evidence="15">
    <location>
        <position position="64"/>
    </location>
</feature>
<feature type="modified residue" description="Phosphoserine" evidence="2">
    <location>
        <position position="143"/>
    </location>
</feature>
<feature type="modified residue" description="Phosphoserine" evidence="3">
    <location>
        <position position="165"/>
    </location>
</feature>
<feature type="modified residue" description="Phosphoserine" evidence="3">
    <location>
        <position position="169"/>
    </location>
</feature>
<feature type="modified residue" description="Phosphoserine" evidence="2">
    <location>
        <position position="179"/>
    </location>
</feature>
<feature type="modified residue" description="Phosphoserine" evidence="2">
    <location>
        <position position="225"/>
    </location>
</feature>
<feature type="modified residue" description="Phosphotyrosine" evidence="2">
    <location>
        <position position="241"/>
    </location>
</feature>
<feature type="modified residue" description="Phosphoserine" evidence="2">
    <location>
        <position position="298"/>
    </location>
</feature>
<feature type="modified residue" description="Phosphoserine" evidence="2">
    <location>
        <position position="307"/>
    </location>
</feature>
<feature type="modified residue" description="Phosphoserine" evidence="2">
    <location>
        <position position="324"/>
    </location>
</feature>
<feature type="modified residue" description="Omega-N-methylarginine" evidence="2">
    <location>
        <position position="329"/>
    </location>
</feature>
<feature type="modified residue" description="Omega-N-methylarginine" evidence="2">
    <location>
        <position position="336"/>
    </location>
</feature>
<feature type="modified residue" description="Phosphoserine" evidence="2">
    <location>
        <position position="343"/>
    </location>
</feature>
<feature type="modified residue" description="Phosphoserine" evidence="2">
    <location>
        <position position="362"/>
    </location>
</feature>
<feature type="modified residue" description="Phosphoserine" evidence="15">
    <location>
        <position position="364"/>
    </location>
</feature>
<feature type="modified residue" description="Phosphotyrosine" evidence="2">
    <location>
        <position position="396"/>
    </location>
</feature>
<feature type="modified residue" description="Phosphoserine" evidence="2">
    <location>
        <position position="493"/>
    </location>
</feature>
<feature type="modified residue" description="Phosphoserine" evidence="2">
    <location>
        <position position="496"/>
    </location>
</feature>
<feature type="modified residue" description="Phosphoserine" evidence="2">
    <location>
        <position position="500"/>
    </location>
</feature>
<feature type="modified residue" description="Omega-N-methylarginine" evidence="2">
    <location>
        <position position="501"/>
    </location>
</feature>
<feature type="modified residue" description="Phosphoserine" evidence="2">
    <location>
        <position position="503"/>
    </location>
</feature>
<feature type="modified residue" description="Phosphoserine" evidence="2">
    <location>
        <position position="513"/>
    </location>
</feature>
<feature type="modified residue" description="Phosphoserine" evidence="2">
    <location>
        <position position="515"/>
    </location>
</feature>
<feature type="modified residue" description="Phosphoserine" evidence="2">
    <location>
        <position position="517"/>
    </location>
</feature>
<feature type="modified residue" description="Phosphoserine" evidence="2">
    <location>
        <position position="522"/>
    </location>
</feature>
<feature type="modified residue" description="Phosphoserine" evidence="2">
    <location>
        <position position="598"/>
    </location>
</feature>
<feature type="modified residue" description="Phosphoserine" evidence="2">
    <location>
        <position position="621"/>
    </location>
</feature>
<feature type="modified residue" description="Phosphothreonine" evidence="2">
    <location>
        <position position="624"/>
    </location>
</feature>
<feature type="modified residue" description="Phosphothreonine" evidence="2">
    <location>
        <position position="637"/>
    </location>
</feature>
<feature type="modified residue" description="Phosphoserine" evidence="2">
    <location>
        <position position="844"/>
    </location>
</feature>
<feature type="modified residue" description="Phosphoserine" evidence="15">
    <location>
        <position position="857"/>
    </location>
</feature>
<feature type="modified residue" description="Phosphoserine" evidence="15">
    <location>
        <position position="866"/>
    </location>
</feature>
<feature type="modified residue" description="Phosphothreonine" evidence="15">
    <location>
        <position position="884"/>
    </location>
</feature>
<feature type="modified residue" description="Phosphoserine" evidence="2">
    <location>
        <position position="987"/>
    </location>
</feature>
<feature type="modified residue" description="Phosphoserine" evidence="2">
    <location>
        <position position="1043"/>
    </location>
</feature>
<feature type="modified residue" description="Phosphoserine" evidence="2">
    <location>
        <position position="1060"/>
    </location>
</feature>
<feature type="splice variant" id="VSP_059450" description="In isoform 3.">
    <location>
        <begin position="1"/>
        <end position="694"/>
    </location>
</feature>
<feature type="splice variant" id="VSP_059451" description="In isoform 2.">
    <original>MGNAPSQDPERSSPPMLSADDAEYPREYRTLGGGGGGGSGGRRFSNVGLVHTSERRHTVIAAQSLEALSGLQKADADRKRDAFMDHLKSKYPQHALALRGQQDRMREQPNYWSFKTRSSRHTQGAQPGLADQAAKLSYASAESLETMSEAELPLGFSRMNRFRQSLPLSRSASQTKLRSP</original>
    <variation>MRGAWVHLHSGAASSLRPCRCGAGAAPKSSPRSPGGRRGDGSSDSEGGVSFA</variation>
    <location>
        <begin position="1"/>
        <end position="180"/>
    </location>
</feature>
<feature type="splice variant" id="VSP_059452" description="In isoform 3.">
    <original>AAERDWEEKRAALTQYSAKDINRLLEETQAELLKAIPDLDCA</original>
    <variation>VLGPGIVGGAMSQVHTFLRPSFLEWGVPILWVFFLGGGGPVP</variation>
    <location>
        <begin position="910"/>
        <end position="951"/>
    </location>
</feature>
<feature type="splice variant" id="VSP_059453" description="In isoform 3.">
    <location>
        <begin position="952"/>
        <end position="1183"/>
    </location>
</feature>
<feature type="splice variant" id="VSP_059454" description="In isoform 2.">
    <location>
        <begin position="1141"/>
        <end position="1183"/>
    </location>
</feature>
<feature type="sequence conflict" description="In Ref. 1; BAD03968." evidence="12" ref="1">
    <original>L</original>
    <variation>P</variation>
    <location>
        <position position="177"/>
    </location>
</feature>
<feature type="sequence conflict" description="In Ref. 6; AA sequence." evidence="12" ref="6">
    <location>
        <position position="442"/>
    </location>
</feature>
<feature type="sequence conflict" description="In Ref. 2; BAC86634." evidence="12" ref="2">
    <original>T</original>
    <variation>I</variation>
    <location>
        <position position="609"/>
    </location>
</feature>
<feature type="sequence conflict" description="In Ref. 6; AA sequence." evidence="12" ref="6">
    <original>L</original>
    <variation>I</variation>
    <location>
        <position position="720"/>
    </location>
</feature>
<feature type="sequence conflict" description="In Ref. 6; AA sequence." evidence="12" ref="6">
    <original>V</original>
    <variation>M</variation>
    <location>
        <position position="833"/>
    </location>
</feature>
<feature type="sequence conflict" description="In Ref. 6; AA sequence." evidence="12" ref="6">
    <original>LS</original>
    <variation>IN</variation>
    <location>
        <begin position="841"/>
        <end position="842"/>
    </location>
</feature>
<feature type="sequence conflict" description="In Ref. 6; AA sequence." evidence="12" ref="6">
    <original>H</original>
    <variation>E</variation>
    <location>
        <position position="971"/>
    </location>
</feature>
<feature type="sequence conflict" description="In Ref. 6; AA sequence." evidence="12" ref="6">
    <original>R</original>
    <variation>K</variation>
    <location>
        <position position="978"/>
    </location>
</feature>
<feature type="sequence conflict" description="In Ref. 6; AA sequence." evidence="12" ref="6">
    <original>Y</original>
    <variation>R</variation>
    <location>
        <position position="995"/>
    </location>
</feature>
<feature type="sequence conflict" description="In Ref. 6; AA sequence." evidence="12" ref="6">
    <original>I</original>
    <variation>L</variation>
    <location>
        <position position="1086"/>
    </location>
</feature>
<feature type="sequence conflict" description="In Ref. 6; AA sequence." evidence="12" ref="6">
    <original>Q</original>
    <variation>P</variation>
    <location>
        <position position="1115"/>
    </location>
</feature>
<feature type="sequence conflict" description="In Ref. 6; AA sequence." evidence="12" ref="6">
    <original>S</original>
    <variation>G</variation>
    <location>
        <position position="1122"/>
    </location>
</feature>
<feature type="sequence conflict" description="In Ref. 2; BAC86634." evidence="12" ref="2">
    <original>A</original>
    <variation>V</variation>
    <location>
        <position position="1140"/>
    </location>
</feature>
<dbReference type="EMBL" id="AB127405">
    <property type="protein sequence ID" value="BAD03968.1"/>
    <property type="molecule type" value="mRNA"/>
</dbReference>
<dbReference type="EMBL" id="AK126665">
    <property type="protein sequence ID" value="BAC86634.1"/>
    <property type="molecule type" value="mRNA"/>
</dbReference>
<dbReference type="EMBL" id="AC006449">
    <property type="status" value="NOT_ANNOTATED_CDS"/>
    <property type="molecule type" value="Genomic_DNA"/>
</dbReference>
<dbReference type="EMBL" id="AC115090">
    <property type="status" value="NOT_ANNOTATED_CDS"/>
    <property type="molecule type" value="Genomic_DNA"/>
</dbReference>
<dbReference type="EMBL" id="AC129916">
    <property type="status" value="NOT_ANNOTATED_CDS"/>
    <property type="molecule type" value="Genomic_DNA"/>
</dbReference>
<dbReference type="EMBL" id="AC244153">
    <property type="status" value="NOT_ANNOTATED_CDS"/>
    <property type="molecule type" value="Genomic_DNA"/>
</dbReference>
<dbReference type="EMBL" id="KC877653">
    <property type="status" value="NOT_ANNOTATED_CDS"/>
    <property type="molecule type" value="Genomic_DNA"/>
</dbReference>
<dbReference type="EMBL" id="BC033233">
    <property type="protein sequence ID" value="AAH33233.1"/>
    <property type="molecule type" value="mRNA"/>
</dbReference>
<dbReference type="EMBL" id="AB051471">
    <property type="protein sequence ID" value="BAB21775.1"/>
    <property type="molecule type" value="mRNA"/>
</dbReference>
<dbReference type="CCDS" id="CCDS45660.1">
    <molecule id="Q9C0H9-5"/>
</dbReference>
<dbReference type="RefSeq" id="NP_079524.2">
    <molecule id="Q9C0H9-5"/>
    <property type="nucleotide sequence ID" value="NM_025248.3"/>
</dbReference>
<dbReference type="SMR" id="Q9C0H9"/>
<dbReference type="BioGRID" id="123275">
    <property type="interactions" value="28"/>
</dbReference>
<dbReference type="ELM" id="Q9C0H9"/>
<dbReference type="FunCoup" id="Q9C0H9">
    <property type="interactions" value="523"/>
</dbReference>
<dbReference type="IntAct" id="Q9C0H9">
    <property type="interactions" value="23"/>
</dbReference>
<dbReference type="MINT" id="Q9C0H9"/>
<dbReference type="STRING" id="9606.ENSP00000484715"/>
<dbReference type="BindingDB" id="Q9C0H9"/>
<dbReference type="ChEMBL" id="CHEMBL2150836"/>
<dbReference type="GlyGen" id="Q9C0H9">
    <property type="glycosylation" value="5 sites, 1 O-linked glycan (2 sites)"/>
</dbReference>
<dbReference type="iPTMnet" id="Q9C0H9"/>
<dbReference type="PhosphoSitePlus" id="Q9C0H9"/>
<dbReference type="SwissPalm" id="Q9C0H9"/>
<dbReference type="BioMuta" id="SRCIN1"/>
<dbReference type="DMDM" id="296452948"/>
<dbReference type="jPOST" id="Q9C0H9"/>
<dbReference type="MassIVE" id="Q9C0H9"/>
<dbReference type="PaxDb" id="9606-ENSP00000484715"/>
<dbReference type="PeptideAtlas" id="Q9C0H9"/>
<dbReference type="ProteomicsDB" id="80047">
    <molecule id="Q9C0H9-2"/>
</dbReference>
<dbReference type="ProteomicsDB" id="80048">
    <molecule id="Q9C0H9-4"/>
</dbReference>
<dbReference type="ProteomicsDB" id="80049">
    <molecule id="Q9C0H9-5"/>
</dbReference>
<dbReference type="Antibodypedia" id="74250">
    <property type="antibodies" value="76 antibodies from 22 providers"/>
</dbReference>
<dbReference type="DNASU" id="80725"/>
<dbReference type="Ensembl" id="ENST00000615049.4">
    <molecule id="Q9C0H9-5"/>
    <property type="protein sequence ID" value="ENSP00000480869.1"/>
    <property type="gene ID" value="ENSG00000273608.4"/>
</dbReference>
<dbReference type="Ensembl" id="ENST00000617146.5">
    <molecule id="Q9C0H9-5"/>
    <property type="protein sequence ID" value="ENSP00000484715.1"/>
    <property type="gene ID" value="ENSG00000277363.5"/>
</dbReference>
<dbReference type="GeneID" id="80725"/>
<dbReference type="KEGG" id="hsa:80725"/>
<dbReference type="MANE-Select" id="ENST00000617146.5">
    <property type="protein sequence ID" value="ENSP00000484715.1"/>
    <property type="RefSeq nucleotide sequence ID" value="NM_025248.3"/>
    <property type="RefSeq protein sequence ID" value="NP_079524.2"/>
</dbReference>
<dbReference type="AGR" id="HGNC:29506"/>
<dbReference type="CTD" id="80725"/>
<dbReference type="DisGeNET" id="80725"/>
<dbReference type="GeneCards" id="SRCIN1"/>
<dbReference type="HGNC" id="HGNC:29506">
    <property type="gene designation" value="SRCIN1"/>
</dbReference>
<dbReference type="HPA" id="ENSG00000277363">
    <property type="expression patterns" value="Tissue enriched (brain)"/>
</dbReference>
<dbReference type="MIM" id="610786">
    <property type="type" value="gene"/>
</dbReference>
<dbReference type="neXtProt" id="NX_Q9C0H9"/>
<dbReference type="OpenTargets" id="ENSG00000277363"/>
<dbReference type="PharmGKB" id="PA165432823"/>
<dbReference type="VEuPathDB" id="HostDB:ENSG00000277363"/>
<dbReference type="eggNOG" id="ENOG502QPNH">
    <property type="taxonomic scope" value="Eukaryota"/>
</dbReference>
<dbReference type="GeneTree" id="ENSGT00940000157961"/>
<dbReference type="InParanoid" id="Q9C0H9"/>
<dbReference type="OMA" id="DRMREQX"/>
<dbReference type="OrthoDB" id="6022652at2759"/>
<dbReference type="PAN-GO" id="Q9C0H9">
    <property type="GO annotations" value="4 GO annotations based on evolutionary models"/>
</dbReference>
<dbReference type="PhylomeDB" id="Q9C0H9"/>
<dbReference type="TreeFam" id="TF332255"/>
<dbReference type="PathwayCommons" id="Q9C0H9"/>
<dbReference type="SignaLink" id="Q9C0H9"/>
<dbReference type="SIGNOR" id="Q9C0H9"/>
<dbReference type="BioGRID-ORCS" id="80725">
    <property type="hits" value="19 hits in 1143 CRISPR screens"/>
</dbReference>
<dbReference type="ChiTaRS" id="SRCIN1">
    <property type="organism name" value="human"/>
</dbReference>
<dbReference type="GenomeRNAi" id="80725"/>
<dbReference type="Pharos" id="Q9C0H9">
    <property type="development level" value="Tbio"/>
</dbReference>
<dbReference type="PRO" id="PR:Q9C0H9"/>
<dbReference type="Proteomes" id="UP000005640">
    <property type="component" value="Chromosome 17"/>
</dbReference>
<dbReference type="RNAct" id="Q9C0H9">
    <property type="molecule type" value="protein"/>
</dbReference>
<dbReference type="Bgee" id="ENSG00000277363">
    <property type="expression patterns" value="Expressed in C1 segment of cervical spinal cord and 94 other cell types or tissues"/>
</dbReference>
<dbReference type="ExpressionAtlas" id="Q9C0H9">
    <property type="expression patterns" value="baseline and differential"/>
</dbReference>
<dbReference type="GO" id="GO:0015629">
    <property type="term" value="C:actin cytoskeleton"/>
    <property type="evidence" value="ECO:0000314"/>
    <property type="project" value="MGI"/>
</dbReference>
<dbReference type="GO" id="GO:0030424">
    <property type="term" value="C:axon"/>
    <property type="evidence" value="ECO:0000250"/>
    <property type="project" value="UniProtKB"/>
</dbReference>
<dbReference type="GO" id="GO:0005737">
    <property type="term" value="C:cytoplasm"/>
    <property type="evidence" value="ECO:0000314"/>
    <property type="project" value="UniProtKB"/>
</dbReference>
<dbReference type="GO" id="GO:0030425">
    <property type="term" value="C:dendrite"/>
    <property type="evidence" value="ECO:0000250"/>
    <property type="project" value="UniProtKB"/>
</dbReference>
<dbReference type="GO" id="GO:0098978">
    <property type="term" value="C:glutamatergic synapse"/>
    <property type="evidence" value="ECO:0000314"/>
    <property type="project" value="SynGO"/>
</dbReference>
<dbReference type="GO" id="GO:0014069">
    <property type="term" value="C:postsynaptic density"/>
    <property type="evidence" value="ECO:0000250"/>
    <property type="project" value="UniProtKB"/>
</dbReference>
<dbReference type="GO" id="GO:0098793">
    <property type="term" value="C:presynapse"/>
    <property type="evidence" value="ECO:0007669"/>
    <property type="project" value="UniProtKB-SubCell"/>
</dbReference>
<dbReference type="GO" id="GO:0045202">
    <property type="term" value="C:synapse"/>
    <property type="evidence" value="ECO:0000250"/>
    <property type="project" value="UniProtKB"/>
</dbReference>
<dbReference type="GO" id="GO:0019901">
    <property type="term" value="F:protein kinase binding"/>
    <property type="evidence" value="ECO:0000314"/>
    <property type="project" value="UniProtKB"/>
</dbReference>
<dbReference type="GO" id="GO:0006887">
    <property type="term" value="P:exocytosis"/>
    <property type="evidence" value="ECO:0007669"/>
    <property type="project" value="UniProtKB-KW"/>
</dbReference>
<dbReference type="GO" id="GO:0061099">
    <property type="term" value="P:negative regulation of protein tyrosine kinase activity"/>
    <property type="evidence" value="ECO:0000314"/>
    <property type="project" value="UniProtKB"/>
</dbReference>
<dbReference type="GO" id="GO:0061098">
    <property type="term" value="P:positive regulation of protein tyrosine kinase activity"/>
    <property type="evidence" value="ECO:0000314"/>
    <property type="project" value="UniProtKB"/>
</dbReference>
<dbReference type="GO" id="GO:0098974">
    <property type="term" value="P:postsynaptic actin cytoskeleton organization"/>
    <property type="evidence" value="ECO:0000314"/>
    <property type="project" value="SynGO"/>
</dbReference>
<dbReference type="GO" id="GO:0030334">
    <property type="term" value="P:regulation of cell migration"/>
    <property type="evidence" value="ECO:0000315"/>
    <property type="project" value="UniProtKB"/>
</dbReference>
<dbReference type="GO" id="GO:0061001">
    <property type="term" value="P:regulation of dendritic spine morphogenesis"/>
    <property type="evidence" value="ECO:0000315"/>
    <property type="project" value="UniProtKB"/>
</dbReference>
<dbReference type="GO" id="GO:0034446">
    <property type="term" value="P:substrate adhesion-dependent cell spreading"/>
    <property type="evidence" value="ECO:0000315"/>
    <property type="project" value="UniProtKB"/>
</dbReference>
<dbReference type="FunFam" id="1.20.58.1540:FF:000001">
    <property type="entry name" value="SRC kinase signaling inhibitor 1"/>
    <property type="match status" value="1"/>
</dbReference>
<dbReference type="Gene3D" id="1.20.58.1540">
    <property type="entry name" value="Actin interacting protein 3, C-terminal domain"/>
    <property type="match status" value="1"/>
</dbReference>
<dbReference type="InterPro" id="IPR022782">
    <property type="entry name" value="AIP3-like_C"/>
</dbReference>
<dbReference type="InterPro" id="IPR051825">
    <property type="entry name" value="SRCIN1"/>
</dbReference>
<dbReference type="PANTHER" id="PTHR22741">
    <property type="entry name" value="P140CAP/SNIP-RELATED"/>
    <property type="match status" value="1"/>
</dbReference>
<dbReference type="PANTHER" id="PTHR22741:SF5">
    <property type="entry name" value="SRC KINASE SIGNALING INHIBITOR 1"/>
    <property type="match status" value="1"/>
</dbReference>
<dbReference type="Pfam" id="PF03915">
    <property type="entry name" value="AIP3"/>
    <property type="match status" value="1"/>
</dbReference>
<accession>Q9C0H9</accession>
<accession>Q75T46</accession>
<accession>Q8N4W8</accession>
<protein>
    <recommendedName>
        <fullName evidence="12">SRC kinase signaling inhibitor 1</fullName>
    </recommendedName>
    <alternativeName>
        <fullName>SNAP-25-interacting protein</fullName>
        <shortName evidence="11">SNIP</shortName>
    </alternativeName>
    <alternativeName>
        <fullName>p130Cas-associated protein</fullName>
    </alternativeName>
    <alternativeName>
        <fullName>p140Cap</fullName>
    </alternativeName>
</protein>
<gene>
    <name evidence="14" type="primary">SRCIN1</name>
    <name type="synonym">KIAA1684</name>
    <name evidence="11" type="synonym">P140</name>
    <name evidence="11" type="synonym">SNIP</name>
</gene>